<organism>
    <name type="scientific">Hyphantria cunea</name>
    <name type="common">Fall webworm moth</name>
    <name type="synonym">Phalaena cunea</name>
    <dbReference type="NCBI Taxonomy" id="39466"/>
    <lineage>
        <taxon>Eukaryota</taxon>
        <taxon>Metazoa</taxon>
        <taxon>Ecdysozoa</taxon>
        <taxon>Arthropoda</taxon>
        <taxon>Hexapoda</taxon>
        <taxon>Insecta</taxon>
        <taxon>Pterygota</taxon>
        <taxon>Neoptera</taxon>
        <taxon>Endopterygota</taxon>
        <taxon>Lepidoptera</taxon>
        <taxon>Glossata</taxon>
        <taxon>Ditrysia</taxon>
        <taxon>Noctuoidea</taxon>
        <taxon>Erebidae</taxon>
        <taxon>Arctiinae</taxon>
        <taxon>Hyphantria</taxon>
    </lineage>
</organism>
<feature type="signal peptide" evidence="1">
    <location>
        <begin position="1"/>
        <end position="22"/>
    </location>
</feature>
<feature type="propeptide" id="PRO_0000004865" description="Removed by a dipeptidylpeptidase" evidence="1">
    <location>
        <begin position="23"/>
        <end position="26"/>
    </location>
</feature>
<feature type="chain" id="PRO_0000004866" description="Hyphancin-3D">
    <location>
        <begin position="27"/>
        <end position="61"/>
    </location>
</feature>
<feature type="modified residue" description="Leucine amide" evidence="1">
    <location>
        <position position="61"/>
    </location>
</feature>
<accession>P50720</accession>
<protein>
    <recommendedName>
        <fullName>Hyphancin-3D</fullName>
    </recommendedName>
    <alternativeName>
        <fullName>Cecropin-A</fullName>
    </alternativeName>
    <alternativeName>
        <fullName>Hyphancin-IIID</fullName>
    </alternativeName>
</protein>
<reference key="1">
    <citation type="submission" date="1995-03" db="EMBL/GenBank/DDBJ databases">
        <authorList>
            <person name="Park S.-S."/>
            <person name="Shin S.W."/>
            <person name="Kim M.K."/>
            <person name="Park D.S."/>
            <person name="Oh H.W."/>
            <person name="Park H.Y."/>
        </authorList>
    </citation>
    <scope>NUCLEOTIDE SEQUENCE [MRNA]</scope>
</reference>
<sequence length="63" mass="6844">MNFSRIIFLVFACFVALASVSAAPEPRWKIFKKIERVGQNVRDGIIKAGPAIQVLGTAKALGK</sequence>
<dbReference type="EMBL" id="U23833">
    <property type="protein sequence ID" value="AAB39002.1"/>
    <property type="molecule type" value="mRNA"/>
</dbReference>
<dbReference type="SMR" id="P50720"/>
<dbReference type="TCDB" id="1.C.17.1.2">
    <property type="family name" value="the cecropin (cecropin) family"/>
</dbReference>
<dbReference type="GO" id="GO:0005576">
    <property type="term" value="C:extracellular region"/>
    <property type="evidence" value="ECO:0007669"/>
    <property type="project" value="UniProtKB-SubCell"/>
</dbReference>
<dbReference type="GO" id="GO:0019731">
    <property type="term" value="P:antibacterial humoral response"/>
    <property type="evidence" value="ECO:0007669"/>
    <property type="project" value="InterPro"/>
</dbReference>
<dbReference type="GO" id="GO:0050830">
    <property type="term" value="P:defense response to Gram-positive bacterium"/>
    <property type="evidence" value="ECO:0007669"/>
    <property type="project" value="UniProtKB-ARBA"/>
</dbReference>
<dbReference type="GO" id="GO:0045087">
    <property type="term" value="P:innate immune response"/>
    <property type="evidence" value="ECO:0007669"/>
    <property type="project" value="UniProtKB-KW"/>
</dbReference>
<dbReference type="InterPro" id="IPR000875">
    <property type="entry name" value="Cecropin"/>
</dbReference>
<dbReference type="Pfam" id="PF00272">
    <property type="entry name" value="Cecropin"/>
    <property type="match status" value="1"/>
</dbReference>
<dbReference type="PROSITE" id="PS00268">
    <property type="entry name" value="CECROPIN"/>
    <property type="match status" value="1"/>
</dbReference>
<evidence type="ECO:0000255" key="1"/>
<evidence type="ECO:0000305" key="2"/>
<comment type="function">
    <text>Has antibacterial activity.</text>
</comment>
<comment type="subcellular location">
    <subcellularLocation>
        <location>Secreted</location>
    </subcellularLocation>
</comment>
<comment type="similarity">
    <text evidence="2">Belongs to the cecropin family.</text>
</comment>
<keyword id="KW-0027">Amidation</keyword>
<keyword id="KW-0044">Antibiotic</keyword>
<keyword id="KW-0929">Antimicrobial</keyword>
<keyword id="KW-0391">Immunity</keyword>
<keyword id="KW-0399">Innate immunity</keyword>
<keyword id="KW-0964">Secreted</keyword>
<keyword id="KW-0732">Signal</keyword>
<name>CE3D_HYPCU</name>
<proteinExistence type="inferred from homology"/>